<proteinExistence type="inferred from homology"/>
<sequence length="211" mass="24163">MQRMIEISSPFFLNPDELSTPADWAAVFGNANPLALEIGCGIGDFIARTAADNPGTNYIAIDFYNKGCDKTCRRLERLAIPNVRVVRDEARKFIVERIPKGSLCAVHINCPDPWPKMRHRKRRLVNREFAAFIREYLAPGGDFYFATDFDDYGIDVAEFMPGVEGYANMLAPDRYRHELEGYHLSKYMMKFMAEGKRIYFVHYRKTAEGAA</sequence>
<feature type="chain" id="PRO_0000229165" description="tRNA (guanine-N(7)-)-methyltransferase">
    <location>
        <begin position="1"/>
        <end position="211"/>
    </location>
</feature>
<feature type="active site" evidence="1">
    <location>
        <position position="112"/>
    </location>
</feature>
<feature type="binding site" evidence="2">
    <location>
        <position position="37"/>
    </location>
    <ligand>
        <name>S-adenosyl-L-methionine</name>
        <dbReference type="ChEBI" id="CHEBI:59789"/>
    </ligand>
</feature>
<feature type="binding site" evidence="2">
    <location>
        <position position="62"/>
    </location>
    <ligand>
        <name>S-adenosyl-L-methionine</name>
        <dbReference type="ChEBI" id="CHEBI:59789"/>
    </ligand>
</feature>
<feature type="binding site" evidence="2">
    <location>
        <position position="89"/>
    </location>
    <ligand>
        <name>S-adenosyl-L-methionine</name>
        <dbReference type="ChEBI" id="CHEBI:59789"/>
    </ligand>
</feature>
<feature type="binding site" evidence="2">
    <location>
        <position position="112"/>
    </location>
    <ligand>
        <name>S-adenosyl-L-methionine</name>
        <dbReference type="ChEBI" id="CHEBI:59789"/>
    </ligand>
</feature>
<feature type="binding site" evidence="2">
    <location>
        <position position="116"/>
    </location>
    <ligand>
        <name>substrate</name>
    </ligand>
</feature>
<feature type="binding site" evidence="2">
    <location>
        <position position="148"/>
    </location>
    <ligand>
        <name>substrate</name>
    </ligand>
</feature>
<keyword id="KW-0489">Methyltransferase</keyword>
<keyword id="KW-1185">Reference proteome</keyword>
<keyword id="KW-0949">S-adenosyl-L-methionine</keyword>
<keyword id="KW-0808">Transferase</keyword>
<keyword id="KW-0819">tRNA processing</keyword>
<gene>
    <name evidence="2" type="primary">trmB</name>
    <name type="ordered locus">Gmet_3034</name>
</gene>
<dbReference type="EC" id="2.1.1.33" evidence="2"/>
<dbReference type="EMBL" id="CP000148">
    <property type="protein sequence ID" value="ABB33249.2"/>
    <property type="molecule type" value="Genomic_DNA"/>
</dbReference>
<dbReference type="RefSeq" id="WP_011366135.1">
    <property type="nucleotide sequence ID" value="NC_007517.1"/>
</dbReference>
<dbReference type="SMR" id="Q39R75"/>
<dbReference type="STRING" id="269799.Gmet_3034"/>
<dbReference type="KEGG" id="gme:Gmet_3034"/>
<dbReference type="eggNOG" id="COG0220">
    <property type="taxonomic scope" value="Bacteria"/>
</dbReference>
<dbReference type="HOGENOM" id="CLU_050910_2_0_7"/>
<dbReference type="UniPathway" id="UPA00989"/>
<dbReference type="Proteomes" id="UP000007073">
    <property type="component" value="Chromosome"/>
</dbReference>
<dbReference type="GO" id="GO:0043527">
    <property type="term" value="C:tRNA methyltransferase complex"/>
    <property type="evidence" value="ECO:0007669"/>
    <property type="project" value="TreeGrafter"/>
</dbReference>
<dbReference type="GO" id="GO:0008176">
    <property type="term" value="F:tRNA (guanine(46)-N7)-methyltransferase activity"/>
    <property type="evidence" value="ECO:0007669"/>
    <property type="project" value="UniProtKB-UniRule"/>
</dbReference>
<dbReference type="CDD" id="cd02440">
    <property type="entry name" value="AdoMet_MTases"/>
    <property type="match status" value="1"/>
</dbReference>
<dbReference type="Gene3D" id="3.40.50.150">
    <property type="entry name" value="Vaccinia Virus protein VP39"/>
    <property type="match status" value="1"/>
</dbReference>
<dbReference type="HAMAP" id="MF_01057">
    <property type="entry name" value="tRNA_methyltr_TrmB"/>
    <property type="match status" value="1"/>
</dbReference>
<dbReference type="InterPro" id="IPR029063">
    <property type="entry name" value="SAM-dependent_MTases_sf"/>
</dbReference>
<dbReference type="InterPro" id="IPR003358">
    <property type="entry name" value="tRNA_(Gua-N-7)_MeTrfase_Trmb"/>
</dbReference>
<dbReference type="InterPro" id="IPR055361">
    <property type="entry name" value="tRNA_methyltr_TrmB_bact"/>
</dbReference>
<dbReference type="NCBIfam" id="TIGR00091">
    <property type="entry name" value="tRNA (guanosine(46)-N7)-methyltransferase TrmB"/>
    <property type="match status" value="1"/>
</dbReference>
<dbReference type="PANTHER" id="PTHR23417">
    <property type="entry name" value="3-DEOXY-D-MANNO-OCTULOSONIC-ACID TRANSFERASE/TRNA GUANINE-N 7 - -METHYLTRANSFERASE"/>
    <property type="match status" value="1"/>
</dbReference>
<dbReference type="PANTHER" id="PTHR23417:SF14">
    <property type="entry name" value="PENTACOTRIPEPTIDE-REPEAT REGION OF PRORP DOMAIN-CONTAINING PROTEIN"/>
    <property type="match status" value="1"/>
</dbReference>
<dbReference type="Pfam" id="PF02390">
    <property type="entry name" value="Methyltransf_4"/>
    <property type="match status" value="1"/>
</dbReference>
<dbReference type="SUPFAM" id="SSF53335">
    <property type="entry name" value="S-adenosyl-L-methionine-dependent methyltransferases"/>
    <property type="match status" value="1"/>
</dbReference>
<dbReference type="PROSITE" id="PS51625">
    <property type="entry name" value="SAM_MT_TRMB"/>
    <property type="match status" value="1"/>
</dbReference>
<name>TRMB_GEOMG</name>
<evidence type="ECO:0000250" key="1"/>
<evidence type="ECO:0000255" key="2">
    <source>
        <dbReference type="HAMAP-Rule" id="MF_01057"/>
    </source>
</evidence>
<protein>
    <recommendedName>
        <fullName evidence="2">tRNA (guanine-N(7)-)-methyltransferase</fullName>
        <ecNumber evidence="2">2.1.1.33</ecNumber>
    </recommendedName>
    <alternativeName>
        <fullName evidence="2">tRNA (guanine(46)-N(7))-methyltransferase</fullName>
    </alternativeName>
    <alternativeName>
        <fullName evidence="2">tRNA(m7G46)-methyltransferase</fullName>
    </alternativeName>
</protein>
<comment type="function">
    <text evidence="2">Catalyzes the formation of N(7)-methylguanine at position 46 (m7G46) in tRNA.</text>
</comment>
<comment type="catalytic activity">
    <reaction evidence="2">
        <text>guanosine(46) in tRNA + S-adenosyl-L-methionine = N(7)-methylguanosine(46) in tRNA + S-adenosyl-L-homocysteine</text>
        <dbReference type="Rhea" id="RHEA:42708"/>
        <dbReference type="Rhea" id="RHEA-COMP:10188"/>
        <dbReference type="Rhea" id="RHEA-COMP:10189"/>
        <dbReference type="ChEBI" id="CHEBI:57856"/>
        <dbReference type="ChEBI" id="CHEBI:59789"/>
        <dbReference type="ChEBI" id="CHEBI:74269"/>
        <dbReference type="ChEBI" id="CHEBI:74480"/>
        <dbReference type="EC" id="2.1.1.33"/>
    </reaction>
</comment>
<comment type="pathway">
    <text evidence="2">tRNA modification; N(7)-methylguanine-tRNA biosynthesis.</text>
</comment>
<comment type="similarity">
    <text evidence="2">Belongs to the class I-like SAM-binding methyltransferase superfamily. TrmB family.</text>
</comment>
<reference key="1">
    <citation type="journal article" date="2009" name="BMC Microbiol.">
        <title>The genome sequence of Geobacter metallireducens: features of metabolism, physiology and regulation common and dissimilar to Geobacter sulfurreducens.</title>
        <authorList>
            <person name="Aklujkar M."/>
            <person name="Krushkal J."/>
            <person name="DiBartolo G."/>
            <person name="Lapidus A."/>
            <person name="Land M.L."/>
            <person name="Lovley D.R."/>
        </authorList>
    </citation>
    <scope>NUCLEOTIDE SEQUENCE [LARGE SCALE GENOMIC DNA]</scope>
    <source>
        <strain>ATCC 53774 / DSM 7210 / GS-15</strain>
    </source>
</reference>
<accession>Q39R75</accession>
<organism>
    <name type="scientific">Geobacter metallireducens (strain ATCC 53774 / DSM 7210 / GS-15)</name>
    <dbReference type="NCBI Taxonomy" id="269799"/>
    <lineage>
        <taxon>Bacteria</taxon>
        <taxon>Pseudomonadati</taxon>
        <taxon>Thermodesulfobacteriota</taxon>
        <taxon>Desulfuromonadia</taxon>
        <taxon>Geobacterales</taxon>
        <taxon>Geobacteraceae</taxon>
        <taxon>Geobacter</taxon>
    </lineage>
</organism>